<dbReference type="EMBL" id="CP000822">
    <property type="protein sequence ID" value="ABV11266.1"/>
    <property type="molecule type" value="Genomic_DNA"/>
</dbReference>
<dbReference type="RefSeq" id="WP_012131104.1">
    <property type="nucleotide sequence ID" value="NC_009792.1"/>
</dbReference>
<dbReference type="STRING" id="290338.CKO_00087"/>
<dbReference type="GeneID" id="45134388"/>
<dbReference type="KEGG" id="cko:CKO_00087"/>
<dbReference type="HOGENOM" id="CLU_008142_4_2_6"/>
<dbReference type="OrthoDB" id="9805577at2"/>
<dbReference type="Proteomes" id="UP000008148">
    <property type="component" value="Chromosome"/>
</dbReference>
<dbReference type="GO" id="GO:0005886">
    <property type="term" value="C:plasma membrane"/>
    <property type="evidence" value="ECO:0007669"/>
    <property type="project" value="UniProtKB-SubCell"/>
</dbReference>
<dbReference type="GO" id="GO:0015079">
    <property type="term" value="F:potassium ion transmembrane transporter activity"/>
    <property type="evidence" value="ECO:0007669"/>
    <property type="project" value="UniProtKB-UniRule"/>
</dbReference>
<dbReference type="GO" id="GO:0015293">
    <property type="term" value="F:symporter activity"/>
    <property type="evidence" value="ECO:0007669"/>
    <property type="project" value="UniProtKB-UniRule"/>
</dbReference>
<dbReference type="HAMAP" id="MF_01522">
    <property type="entry name" value="Kup"/>
    <property type="match status" value="1"/>
</dbReference>
<dbReference type="InterPro" id="IPR003855">
    <property type="entry name" value="K+_transporter"/>
</dbReference>
<dbReference type="InterPro" id="IPR053952">
    <property type="entry name" value="K_trans_C"/>
</dbReference>
<dbReference type="InterPro" id="IPR053951">
    <property type="entry name" value="K_trans_N"/>
</dbReference>
<dbReference type="InterPro" id="IPR023051">
    <property type="entry name" value="Kup"/>
</dbReference>
<dbReference type="NCBIfam" id="TIGR00794">
    <property type="entry name" value="kup"/>
    <property type="match status" value="1"/>
</dbReference>
<dbReference type="NCBIfam" id="NF008015">
    <property type="entry name" value="PRK10745.1"/>
    <property type="match status" value="1"/>
</dbReference>
<dbReference type="PANTHER" id="PTHR30540:SF79">
    <property type="entry name" value="LOW AFFINITY POTASSIUM TRANSPORT SYSTEM PROTEIN KUP"/>
    <property type="match status" value="1"/>
</dbReference>
<dbReference type="PANTHER" id="PTHR30540">
    <property type="entry name" value="OSMOTIC STRESS POTASSIUM TRANSPORTER"/>
    <property type="match status" value="1"/>
</dbReference>
<dbReference type="Pfam" id="PF02705">
    <property type="entry name" value="K_trans"/>
    <property type="match status" value="1"/>
</dbReference>
<dbReference type="Pfam" id="PF22776">
    <property type="entry name" value="K_trans_C"/>
    <property type="match status" value="1"/>
</dbReference>
<accession>A8ACQ3</accession>
<reference key="1">
    <citation type="submission" date="2007-08" db="EMBL/GenBank/DDBJ databases">
        <authorList>
            <consortium name="The Citrobacter koseri Genome Sequencing Project"/>
            <person name="McClelland M."/>
            <person name="Sanderson E.K."/>
            <person name="Porwollik S."/>
            <person name="Spieth J."/>
            <person name="Clifton W.S."/>
            <person name="Latreille P."/>
            <person name="Courtney L."/>
            <person name="Wang C."/>
            <person name="Pepin K."/>
            <person name="Bhonagiri V."/>
            <person name="Nash W."/>
            <person name="Johnson M."/>
            <person name="Thiruvilangam P."/>
            <person name="Wilson R."/>
        </authorList>
    </citation>
    <scope>NUCLEOTIDE SEQUENCE [LARGE SCALE GENOMIC DNA]</scope>
    <source>
        <strain>ATCC BAA-895 / CDC 4225-83 / SGSC4696</strain>
    </source>
</reference>
<gene>
    <name evidence="1" type="primary">kup</name>
    <name type="ordered locus">CKO_00087</name>
</gene>
<proteinExistence type="inferred from homology"/>
<comment type="function">
    <text evidence="1">Responsible for the low-affinity transport of potassium into the cell. Likely operates as a K(+):H(+) symporter.</text>
</comment>
<comment type="catalytic activity">
    <reaction evidence="1">
        <text>K(+)(in) + H(+)(in) = K(+)(out) + H(+)(out)</text>
        <dbReference type="Rhea" id="RHEA:28490"/>
        <dbReference type="ChEBI" id="CHEBI:15378"/>
        <dbReference type="ChEBI" id="CHEBI:29103"/>
    </reaction>
    <physiologicalReaction direction="right-to-left" evidence="1">
        <dbReference type="Rhea" id="RHEA:28492"/>
    </physiologicalReaction>
</comment>
<comment type="subcellular location">
    <subcellularLocation>
        <location evidence="1">Cell inner membrane</location>
        <topology evidence="1">Multi-pass membrane protein</topology>
    </subcellularLocation>
</comment>
<comment type="similarity">
    <text evidence="1">Belongs to the HAK/KUP transporter (TC 2.A.72) family.</text>
</comment>
<feature type="chain" id="PRO_1000068644" description="Low affinity potassium transport system protein Kup">
    <location>
        <begin position="1"/>
        <end position="622"/>
    </location>
</feature>
<feature type="transmembrane region" description="Helical" evidence="1">
    <location>
        <begin position="9"/>
        <end position="29"/>
    </location>
</feature>
<feature type="transmembrane region" description="Helical" evidence="1">
    <location>
        <begin position="49"/>
        <end position="69"/>
    </location>
</feature>
<feature type="transmembrane region" description="Helical" evidence="1">
    <location>
        <begin position="103"/>
        <end position="123"/>
    </location>
</feature>
<feature type="transmembrane region" description="Helical" evidence="1">
    <location>
        <begin position="137"/>
        <end position="157"/>
    </location>
</feature>
<feature type="transmembrane region" description="Helical" evidence="1">
    <location>
        <begin position="165"/>
        <end position="185"/>
    </location>
</feature>
<feature type="transmembrane region" description="Helical" evidence="1">
    <location>
        <begin position="213"/>
        <end position="233"/>
    </location>
</feature>
<feature type="transmembrane region" description="Helical" evidence="1">
    <location>
        <begin position="247"/>
        <end position="267"/>
    </location>
</feature>
<feature type="transmembrane region" description="Helical" evidence="1">
    <location>
        <begin position="276"/>
        <end position="296"/>
    </location>
</feature>
<feature type="transmembrane region" description="Helical" evidence="1">
    <location>
        <begin position="337"/>
        <end position="357"/>
    </location>
</feature>
<feature type="transmembrane region" description="Helical" evidence="1">
    <location>
        <begin position="363"/>
        <end position="383"/>
    </location>
</feature>
<feature type="transmembrane region" description="Helical" evidence="1">
    <location>
        <begin position="396"/>
        <end position="416"/>
    </location>
</feature>
<feature type="transmembrane region" description="Helical" evidence="1">
    <location>
        <begin position="419"/>
        <end position="439"/>
    </location>
</feature>
<evidence type="ECO:0000255" key="1">
    <source>
        <dbReference type="HAMAP-Rule" id="MF_01522"/>
    </source>
</evidence>
<sequence>MSTDNKQSLSAITLAAIGVVYGDIGTSPLYTLRECLSGQFGFGVERDAVFGFLSLIFWLLIFVVSIKYLTFVMRADNAGEGGILTLMSLAGRNTSARMTSTLVIMGLIGGSFFYGEVVITPAISVMSAIEGLEIVAPELDTWVVPLSIIVLTLLFMIQKHGTGMVGKLFAPIMLTWFLILAGLGLRSIIANPDVLHALNPMWAAKFFLEYKTVSFIALGAVVLSITGVEALYADMGHFGKLPIRLAWFSVVLPSLTLNYFGQGALLLKHPEAIKNPFFLLAPEWALIPLLILAALATVIASQAVISGVFSLTRQAVRLGYLSPMRIIHTSEMESGQIYIPFVNWMLYFAVVIVIVSFERSSNLAAAYGIAVTGTMVLTSILSTTVARKNWHWNKYFVALILVAFLCVDVPLFSANLDKLLSGGWLPLTLGIVMFIIMTTWKSERFRLLRRMHEHGNSLEALIASLEKSPPVRVPGTAVYMSRALNVIPFALLHNLKHNKVLHERVILLTLRTEDAPYVHNVRRVQIEQLSPTFWRVVASYGWRETPNVEEVFHRCGLEGLSCRMMETSFFMSHESLILGKRPWYLRLRGKLYLLLQRNALRAPDQFEIPPNRVIELGTQVEI</sequence>
<keyword id="KW-0997">Cell inner membrane</keyword>
<keyword id="KW-1003">Cell membrane</keyword>
<keyword id="KW-0406">Ion transport</keyword>
<keyword id="KW-0472">Membrane</keyword>
<keyword id="KW-0630">Potassium</keyword>
<keyword id="KW-0633">Potassium transport</keyword>
<keyword id="KW-1185">Reference proteome</keyword>
<keyword id="KW-0769">Symport</keyword>
<keyword id="KW-0812">Transmembrane</keyword>
<keyword id="KW-1133">Transmembrane helix</keyword>
<keyword id="KW-0813">Transport</keyword>
<protein>
    <recommendedName>
        <fullName evidence="1">Low affinity potassium transport system protein Kup</fullName>
    </recommendedName>
    <alternativeName>
        <fullName evidence="1">Kup system potassium uptake protein</fullName>
    </alternativeName>
</protein>
<name>KUP_CITK8</name>
<organism>
    <name type="scientific">Citrobacter koseri (strain ATCC BAA-895 / CDC 4225-83 / SGSC4696)</name>
    <dbReference type="NCBI Taxonomy" id="290338"/>
    <lineage>
        <taxon>Bacteria</taxon>
        <taxon>Pseudomonadati</taxon>
        <taxon>Pseudomonadota</taxon>
        <taxon>Gammaproteobacteria</taxon>
        <taxon>Enterobacterales</taxon>
        <taxon>Enterobacteriaceae</taxon>
        <taxon>Citrobacter</taxon>
    </lineage>
</organism>